<sequence>MKLNERSLAFYATCDAPVDNAGFLYKRGGRGTGSHRRWFVLRGNILFYFEAEGSREPLGVILLEGCTVELVDAREEFAFAVRFAGGRSRPYVLAADSQAALEGWVKALSRASFHYLRLVVRELEQQLAAMREGSPANALPANPSPVLTQRPKENGWVVWSTLPEQPSVAPQRPPPLPPRRRASAANGPLASFAQLHARYGLEVQALRDQWRGGQAGLASLEVPWHPGSAETQTQDQPALRGHSGCKVLHVFRSVEWPVCNPGSQGT</sequence>
<protein>
    <recommendedName>
        <fullName>Sesquipedalian-1</fullName>
        <shortName>Ses1</shortName>
    </recommendedName>
    <alternativeName>
        <fullName>27 kDa inositol polyphosphate phosphatase interacting protein A</fullName>
        <shortName>IPIP27A</shortName>
    </alternativeName>
    <alternativeName>
        <fullName evidence="2">PH domain-containing endocytic trafficking adaptor 1</fullName>
    </alternativeName>
</protein>
<proteinExistence type="evidence at transcript level"/>
<keyword id="KW-0968">Cytoplasmic vesicle</keyword>
<keyword id="KW-0967">Endosome</keyword>
<keyword id="KW-0333">Golgi apparatus</keyword>
<keyword id="KW-0597">Phosphoprotein</keyword>
<keyword id="KW-1185">Reference proteome</keyword>
<gene>
    <name evidence="2" type="primary">Pheta1</name>
    <name evidence="6" type="synonym">Fam109a</name>
</gene>
<reference key="1">
    <citation type="journal article" date="2005" name="Science">
        <title>The transcriptional landscape of the mammalian genome.</title>
        <authorList>
            <person name="Carninci P."/>
            <person name="Kasukawa T."/>
            <person name="Katayama S."/>
            <person name="Gough J."/>
            <person name="Frith M.C."/>
            <person name="Maeda N."/>
            <person name="Oyama R."/>
            <person name="Ravasi T."/>
            <person name="Lenhard B."/>
            <person name="Wells C."/>
            <person name="Kodzius R."/>
            <person name="Shimokawa K."/>
            <person name="Bajic V.B."/>
            <person name="Brenner S.E."/>
            <person name="Batalov S."/>
            <person name="Forrest A.R."/>
            <person name="Zavolan M."/>
            <person name="Davis M.J."/>
            <person name="Wilming L.G."/>
            <person name="Aidinis V."/>
            <person name="Allen J.E."/>
            <person name="Ambesi-Impiombato A."/>
            <person name="Apweiler R."/>
            <person name="Aturaliya R.N."/>
            <person name="Bailey T.L."/>
            <person name="Bansal M."/>
            <person name="Baxter L."/>
            <person name="Beisel K.W."/>
            <person name="Bersano T."/>
            <person name="Bono H."/>
            <person name="Chalk A.M."/>
            <person name="Chiu K.P."/>
            <person name="Choudhary V."/>
            <person name="Christoffels A."/>
            <person name="Clutterbuck D.R."/>
            <person name="Crowe M.L."/>
            <person name="Dalla E."/>
            <person name="Dalrymple B.P."/>
            <person name="de Bono B."/>
            <person name="Della Gatta G."/>
            <person name="di Bernardo D."/>
            <person name="Down T."/>
            <person name="Engstrom P."/>
            <person name="Fagiolini M."/>
            <person name="Faulkner G."/>
            <person name="Fletcher C.F."/>
            <person name="Fukushima T."/>
            <person name="Furuno M."/>
            <person name="Futaki S."/>
            <person name="Gariboldi M."/>
            <person name="Georgii-Hemming P."/>
            <person name="Gingeras T.R."/>
            <person name="Gojobori T."/>
            <person name="Green R.E."/>
            <person name="Gustincich S."/>
            <person name="Harbers M."/>
            <person name="Hayashi Y."/>
            <person name="Hensch T.K."/>
            <person name="Hirokawa N."/>
            <person name="Hill D."/>
            <person name="Huminiecki L."/>
            <person name="Iacono M."/>
            <person name="Ikeo K."/>
            <person name="Iwama A."/>
            <person name="Ishikawa T."/>
            <person name="Jakt M."/>
            <person name="Kanapin A."/>
            <person name="Katoh M."/>
            <person name="Kawasawa Y."/>
            <person name="Kelso J."/>
            <person name="Kitamura H."/>
            <person name="Kitano H."/>
            <person name="Kollias G."/>
            <person name="Krishnan S.P."/>
            <person name="Kruger A."/>
            <person name="Kummerfeld S.K."/>
            <person name="Kurochkin I.V."/>
            <person name="Lareau L.F."/>
            <person name="Lazarevic D."/>
            <person name="Lipovich L."/>
            <person name="Liu J."/>
            <person name="Liuni S."/>
            <person name="McWilliam S."/>
            <person name="Madan Babu M."/>
            <person name="Madera M."/>
            <person name="Marchionni L."/>
            <person name="Matsuda H."/>
            <person name="Matsuzawa S."/>
            <person name="Miki H."/>
            <person name="Mignone F."/>
            <person name="Miyake S."/>
            <person name="Morris K."/>
            <person name="Mottagui-Tabar S."/>
            <person name="Mulder N."/>
            <person name="Nakano N."/>
            <person name="Nakauchi H."/>
            <person name="Ng P."/>
            <person name="Nilsson R."/>
            <person name="Nishiguchi S."/>
            <person name="Nishikawa S."/>
            <person name="Nori F."/>
            <person name="Ohara O."/>
            <person name="Okazaki Y."/>
            <person name="Orlando V."/>
            <person name="Pang K.C."/>
            <person name="Pavan W.J."/>
            <person name="Pavesi G."/>
            <person name="Pesole G."/>
            <person name="Petrovsky N."/>
            <person name="Piazza S."/>
            <person name="Reed J."/>
            <person name="Reid J.F."/>
            <person name="Ring B.Z."/>
            <person name="Ringwald M."/>
            <person name="Rost B."/>
            <person name="Ruan Y."/>
            <person name="Salzberg S.L."/>
            <person name="Sandelin A."/>
            <person name="Schneider C."/>
            <person name="Schoenbach C."/>
            <person name="Sekiguchi K."/>
            <person name="Semple C.A."/>
            <person name="Seno S."/>
            <person name="Sessa L."/>
            <person name="Sheng Y."/>
            <person name="Shibata Y."/>
            <person name="Shimada H."/>
            <person name="Shimada K."/>
            <person name="Silva D."/>
            <person name="Sinclair B."/>
            <person name="Sperling S."/>
            <person name="Stupka E."/>
            <person name="Sugiura K."/>
            <person name="Sultana R."/>
            <person name="Takenaka Y."/>
            <person name="Taki K."/>
            <person name="Tammoja K."/>
            <person name="Tan S.L."/>
            <person name="Tang S."/>
            <person name="Taylor M.S."/>
            <person name="Tegner J."/>
            <person name="Teichmann S.A."/>
            <person name="Ueda H.R."/>
            <person name="van Nimwegen E."/>
            <person name="Verardo R."/>
            <person name="Wei C.L."/>
            <person name="Yagi K."/>
            <person name="Yamanishi H."/>
            <person name="Zabarovsky E."/>
            <person name="Zhu S."/>
            <person name="Zimmer A."/>
            <person name="Hide W."/>
            <person name="Bult C."/>
            <person name="Grimmond S.M."/>
            <person name="Teasdale R.D."/>
            <person name="Liu E.T."/>
            <person name="Brusic V."/>
            <person name="Quackenbush J."/>
            <person name="Wahlestedt C."/>
            <person name="Mattick J.S."/>
            <person name="Hume D.A."/>
            <person name="Kai C."/>
            <person name="Sasaki D."/>
            <person name="Tomaru Y."/>
            <person name="Fukuda S."/>
            <person name="Kanamori-Katayama M."/>
            <person name="Suzuki M."/>
            <person name="Aoki J."/>
            <person name="Arakawa T."/>
            <person name="Iida J."/>
            <person name="Imamura K."/>
            <person name="Itoh M."/>
            <person name="Kato T."/>
            <person name="Kawaji H."/>
            <person name="Kawagashira N."/>
            <person name="Kawashima T."/>
            <person name="Kojima M."/>
            <person name="Kondo S."/>
            <person name="Konno H."/>
            <person name="Nakano K."/>
            <person name="Ninomiya N."/>
            <person name="Nishio T."/>
            <person name="Okada M."/>
            <person name="Plessy C."/>
            <person name="Shibata K."/>
            <person name="Shiraki T."/>
            <person name="Suzuki S."/>
            <person name="Tagami M."/>
            <person name="Waki K."/>
            <person name="Watahiki A."/>
            <person name="Okamura-Oho Y."/>
            <person name="Suzuki H."/>
            <person name="Kawai J."/>
            <person name="Hayashizaki Y."/>
        </authorList>
    </citation>
    <scope>NUCLEOTIDE SEQUENCE [LARGE SCALE MRNA]</scope>
    <source>
        <strain>C57BL/6J</strain>
        <tissue>Cecum</tissue>
        <tissue>Hypothalamus</tissue>
    </source>
</reference>
<reference key="2">
    <citation type="submission" date="2005-09" db="EMBL/GenBank/DDBJ databases">
        <authorList>
            <person name="Mural R.J."/>
            <person name="Adams M.D."/>
            <person name="Myers E.W."/>
            <person name="Smith H.O."/>
            <person name="Venter J.C."/>
        </authorList>
    </citation>
    <scope>NUCLEOTIDE SEQUENCE [LARGE SCALE GENOMIC DNA]</scope>
</reference>
<reference key="3">
    <citation type="journal article" date="2004" name="Genome Res.">
        <title>The status, quality, and expansion of the NIH full-length cDNA project: the Mammalian Gene Collection (MGC).</title>
        <authorList>
            <consortium name="The MGC Project Team"/>
        </authorList>
    </citation>
    <scope>NUCLEOTIDE SEQUENCE [LARGE SCALE MRNA]</scope>
    <source>
        <tissue>Brain</tissue>
    </source>
</reference>
<name>SESQ1_MOUSE</name>
<evidence type="ECO:0000250" key="1">
    <source>
        <dbReference type="UniProtKB" id="D3ZL52"/>
    </source>
</evidence>
<evidence type="ECO:0000250" key="2">
    <source>
        <dbReference type="UniProtKB" id="Q8N4B1"/>
    </source>
</evidence>
<evidence type="ECO:0000255" key="3">
    <source>
        <dbReference type="PROSITE-ProRule" id="PRU00145"/>
    </source>
</evidence>
<evidence type="ECO:0000256" key="4">
    <source>
        <dbReference type="SAM" id="MobiDB-lite"/>
    </source>
</evidence>
<evidence type="ECO:0000305" key="5"/>
<evidence type="ECO:0000312" key="6">
    <source>
        <dbReference type="MGI" id="MGI:2442708"/>
    </source>
</evidence>
<organism>
    <name type="scientific">Mus musculus</name>
    <name type="common">Mouse</name>
    <dbReference type="NCBI Taxonomy" id="10090"/>
    <lineage>
        <taxon>Eukaryota</taxon>
        <taxon>Metazoa</taxon>
        <taxon>Chordata</taxon>
        <taxon>Craniata</taxon>
        <taxon>Vertebrata</taxon>
        <taxon>Euteleostomi</taxon>
        <taxon>Mammalia</taxon>
        <taxon>Eutheria</taxon>
        <taxon>Euarchontoglires</taxon>
        <taxon>Glires</taxon>
        <taxon>Rodentia</taxon>
        <taxon>Myomorpha</taxon>
        <taxon>Muroidea</taxon>
        <taxon>Muridae</taxon>
        <taxon>Murinae</taxon>
        <taxon>Mus</taxon>
        <taxon>Mus</taxon>
    </lineage>
</organism>
<dbReference type="EMBL" id="AK033618">
    <property type="protein sequence ID" value="BAC28394.1"/>
    <property type="molecule type" value="mRNA"/>
</dbReference>
<dbReference type="EMBL" id="AK039192">
    <property type="protein sequence ID" value="BAC30272.1"/>
    <property type="molecule type" value="mRNA"/>
</dbReference>
<dbReference type="EMBL" id="CH466529">
    <property type="protein sequence ID" value="EDL19707.1"/>
    <property type="molecule type" value="Genomic_DNA"/>
</dbReference>
<dbReference type="EMBL" id="CH466529">
    <property type="protein sequence ID" value="EDL19708.1"/>
    <property type="molecule type" value="Genomic_DNA"/>
</dbReference>
<dbReference type="EMBL" id="BC120681">
    <property type="protein sequence ID" value="AAI20682.1"/>
    <property type="molecule type" value="mRNA"/>
</dbReference>
<dbReference type="EMBL" id="BC120683">
    <property type="protein sequence ID" value="AAI20684.1"/>
    <property type="molecule type" value="mRNA"/>
</dbReference>
<dbReference type="CCDS" id="CCDS19642.1"/>
<dbReference type="RefSeq" id="NP_001346878.1">
    <property type="nucleotide sequence ID" value="NM_001359949.1"/>
</dbReference>
<dbReference type="RefSeq" id="NP_001346879.1">
    <property type="nucleotide sequence ID" value="NM_001359950.1"/>
</dbReference>
<dbReference type="RefSeq" id="NP_780683.1">
    <property type="nucleotide sequence ID" value="NM_175474.4"/>
</dbReference>
<dbReference type="RefSeq" id="XP_006530367.1">
    <property type="nucleotide sequence ID" value="XM_006530304.3"/>
</dbReference>
<dbReference type="SMR" id="Q8BH49"/>
<dbReference type="BioGRID" id="231160">
    <property type="interactions" value="1"/>
</dbReference>
<dbReference type="FunCoup" id="Q8BH49">
    <property type="interactions" value="723"/>
</dbReference>
<dbReference type="STRING" id="10090.ENSMUSP00000062386"/>
<dbReference type="iPTMnet" id="Q8BH49"/>
<dbReference type="PhosphoSitePlus" id="Q8BH49"/>
<dbReference type="PaxDb" id="10090-ENSMUSP00000062386"/>
<dbReference type="ProteomicsDB" id="256970"/>
<dbReference type="Pumba" id="Q8BH49"/>
<dbReference type="Antibodypedia" id="45279">
    <property type="antibodies" value="72 antibodies from 15 providers"/>
</dbReference>
<dbReference type="DNASU" id="231717"/>
<dbReference type="Ensembl" id="ENSMUST00000056654.8">
    <property type="protein sequence ID" value="ENSMUSP00000062386.4"/>
    <property type="gene ID" value="ENSMUSG00000044134.10"/>
</dbReference>
<dbReference type="Ensembl" id="ENSMUST00000198271.5">
    <property type="protein sequence ID" value="ENSMUSP00000143110.2"/>
    <property type="gene ID" value="ENSMUSG00000044134.10"/>
</dbReference>
<dbReference type="GeneID" id="231717"/>
<dbReference type="KEGG" id="mmu:231717"/>
<dbReference type="UCSC" id="uc008zkj.1">
    <property type="organism name" value="mouse"/>
</dbReference>
<dbReference type="AGR" id="MGI:2442708"/>
<dbReference type="CTD" id="144717"/>
<dbReference type="MGI" id="MGI:2442708">
    <property type="gene designation" value="Pheta1"/>
</dbReference>
<dbReference type="VEuPathDB" id="HostDB:ENSMUSG00000044134"/>
<dbReference type="eggNOG" id="ENOG502QQ94">
    <property type="taxonomic scope" value="Eukaryota"/>
</dbReference>
<dbReference type="GeneTree" id="ENSGT00940000162791"/>
<dbReference type="InParanoid" id="Q8BH49"/>
<dbReference type="OMA" id="IVLEGCN"/>
<dbReference type="OrthoDB" id="10261837at2759"/>
<dbReference type="PhylomeDB" id="Q8BH49"/>
<dbReference type="TreeFam" id="TF326731"/>
<dbReference type="BioGRID-ORCS" id="231717">
    <property type="hits" value="3 hits in 77 CRISPR screens"/>
</dbReference>
<dbReference type="ChiTaRS" id="Pheta1">
    <property type="organism name" value="mouse"/>
</dbReference>
<dbReference type="PRO" id="PR:Q8BH49"/>
<dbReference type="Proteomes" id="UP000000589">
    <property type="component" value="Chromosome 5"/>
</dbReference>
<dbReference type="RNAct" id="Q8BH49">
    <property type="molecule type" value="protein"/>
</dbReference>
<dbReference type="Bgee" id="ENSMUSG00000044134">
    <property type="expression patterns" value="Expressed in jejunum and 162 other cell types or tissues"/>
</dbReference>
<dbReference type="ExpressionAtlas" id="Q8BH49">
    <property type="expression patterns" value="baseline and differential"/>
</dbReference>
<dbReference type="GO" id="GO:0030136">
    <property type="term" value="C:clathrin-coated vesicle"/>
    <property type="evidence" value="ECO:0007669"/>
    <property type="project" value="UniProtKB-SubCell"/>
</dbReference>
<dbReference type="GO" id="GO:0005829">
    <property type="term" value="C:cytosol"/>
    <property type="evidence" value="ECO:0007669"/>
    <property type="project" value="GOC"/>
</dbReference>
<dbReference type="GO" id="GO:0005769">
    <property type="term" value="C:early endosome"/>
    <property type="evidence" value="ECO:0007669"/>
    <property type="project" value="UniProtKB-SubCell"/>
</dbReference>
<dbReference type="GO" id="GO:0055037">
    <property type="term" value="C:recycling endosome"/>
    <property type="evidence" value="ECO:0007669"/>
    <property type="project" value="UniProtKB-SubCell"/>
</dbReference>
<dbReference type="GO" id="GO:0005802">
    <property type="term" value="C:trans-Golgi network"/>
    <property type="evidence" value="ECO:0007669"/>
    <property type="project" value="Ensembl"/>
</dbReference>
<dbReference type="GO" id="GO:0042803">
    <property type="term" value="F:protein homodimerization activity"/>
    <property type="evidence" value="ECO:0007669"/>
    <property type="project" value="Ensembl"/>
</dbReference>
<dbReference type="GO" id="GO:0007032">
    <property type="term" value="P:endosome organization"/>
    <property type="evidence" value="ECO:0007669"/>
    <property type="project" value="Ensembl"/>
</dbReference>
<dbReference type="GO" id="GO:0001881">
    <property type="term" value="P:receptor recycling"/>
    <property type="evidence" value="ECO:0007669"/>
    <property type="project" value="Ensembl"/>
</dbReference>
<dbReference type="GO" id="GO:0042147">
    <property type="term" value="P:retrograde transport, endosome to Golgi"/>
    <property type="evidence" value="ECO:0007669"/>
    <property type="project" value="Ensembl"/>
</dbReference>
<dbReference type="CDD" id="cd13288">
    <property type="entry name" value="PH_Ses"/>
    <property type="match status" value="1"/>
</dbReference>
<dbReference type="FunFam" id="2.30.29.30:FF:000250">
    <property type="entry name" value="Sesquipedalian-1 isoform A"/>
    <property type="match status" value="1"/>
</dbReference>
<dbReference type="Gene3D" id="2.30.29.30">
    <property type="entry name" value="Pleckstrin-homology domain (PH domain)/Phosphotyrosine-binding domain (PTB)"/>
    <property type="match status" value="1"/>
</dbReference>
<dbReference type="InterPro" id="IPR045188">
    <property type="entry name" value="Boi1/Boi2-like"/>
</dbReference>
<dbReference type="InterPro" id="IPR011993">
    <property type="entry name" value="PH-like_dom_sf"/>
</dbReference>
<dbReference type="InterPro" id="IPR001849">
    <property type="entry name" value="PH_domain"/>
</dbReference>
<dbReference type="PANTHER" id="PTHR22902">
    <property type="entry name" value="SESQUIPEDALIAN"/>
    <property type="match status" value="1"/>
</dbReference>
<dbReference type="PANTHER" id="PTHR22902:SF17">
    <property type="entry name" value="SESQUIPEDALIAN-1"/>
    <property type="match status" value="1"/>
</dbReference>
<dbReference type="Pfam" id="PF00169">
    <property type="entry name" value="PH"/>
    <property type="match status" value="1"/>
</dbReference>
<dbReference type="SMART" id="SM00233">
    <property type="entry name" value="PH"/>
    <property type="match status" value="1"/>
</dbReference>
<dbReference type="SUPFAM" id="SSF50729">
    <property type="entry name" value="PH domain-like"/>
    <property type="match status" value="1"/>
</dbReference>
<dbReference type="PROSITE" id="PS50003">
    <property type="entry name" value="PH_DOMAIN"/>
    <property type="match status" value="1"/>
</dbReference>
<accession>Q8BH49</accession>
<comment type="function">
    <text evidence="2">Plays a role in endocytic trafficking. Required for receptor recycling from endosomes, both to the trans-Golgi network and the plasma membrane.</text>
</comment>
<comment type="subunit">
    <text evidence="1 2">Forms homodimers and heterodimers with PHETA2. Interacts with OCRL and INPP5B (By similarity). Interaction with OCRL may be important for endosomal morphology and function (By similarity).</text>
</comment>
<comment type="subcellular location">
    <subcellularLocation>
        <location evidence="2">Early endosome</location>
    </subcellularLocation>
    <subcellularLocation>
        <location evidence="2">Recycling endosome</location>
    </subcellularLocation>
    <subcellularLocation>
        <location evidence="2">Golgi apparatus</location>
        <location evidence="2">trans-Golgi network</location>
    </subcellularLocation>
    <subcellularLocation>
        <location evidence="2">Cytoplasmic vesicle</location>
        <location evidence="2">Clathrin-coated vesicle</location>
    </subcellularLocation>
    <text evidence="2">Interaction with OCRL may be crucial for targeting to endosome and to the trans-Golgi network. Also found on macropinosomes. Not detected in late endosomes, nor in lysosomes.</text>
</comment>
<comment type="domain">
    <text evidence="2">The F&amp;H motif, an approximately 12-13 amino-acid sequence centered around Phe and His residues, is essential for binding to OCRL and INPP5B.</text>
</comment>
<comment type="miscellaneous">
    <text evidence="2">Was named after 'sesquipedalian', an unnecessarily long description of a simple thing.</text>
</comment>
<comment type="similarity">
    <text evidence="5">Belongs to the sesquipedalian family.</text>
</comment>
<feature type="chain" id="PRO_0000406046" description="Sesquipedalian-1">
    <location>
        <begin position="1"/>
        <end position="266"/>
    </location>
</feature>
<feature type="domain" description="PH" evidence="3">
    <location>
        <begin position="17"/>
        <end position="113"/>
    </location>
</feature>
<feature type="region of interest" description="Disordered" evidence="4">
    <location>
        <begin position="165"/>
        <end position="184"/>
    </location>
</feature>
<feature type="short sequence motif" description="F&amp;H">
    <location>
        <begin position="191"/>
        <end position="203"/>
    </location>
</feature>
<feature type="modified residue" description="Phosphoserine" evidence="2">
    <location>
        <position position="183"/>
    </location>
</feature>